<sequence>MWKLWKFVDFRMTAVGFHIFFALIAFAVHFACISSERFNWLEGAPAAEYYMDENPGIWKRTSYDG</sequence>
<keyword id="KW-0042">Antenna complex</keyword>
<keyword id="KW-0076">Bacteriochlorophyll</keyword>
<keyword id="KW-0997">Cell inner membrane</keyword>
<keyword id="KW-1003">Cell membrane</keyword>
<keyword id="KW-0148">Chlorophyll</keyword>
<keyword id="KW-0157">Chromophore</keyword>
<keyword id="KW-0903">Direct protein sequencing</keyword>
<keyword id="KW-0437">Light-harvesting polypeptide</keyword>
<keyword id="KW-0460">Magnesium</keyword>
<keyword id="KW-0472">Membrane</keyword>
<keyword id="KW-0479">Metal-binding</keyword>
<keyword id="KW-0812">Transmembrane</keyword>
<keyword id="KW-1133">Transmembrane helix</keyword>
<accession>P80103</accession>
<protein>
    <recommendedName>
        <fullName>Light-harvesting protein B800/830/1020 alpha-2 chain</fullName>
    </recommendedName>
    <alternativeName>
        <fullName>Antenna pigment protein alpha-2 chain</fullName>
    </alternativeName>
    <alternativeName>
        <fullName>EHS-alpha-2</fullName>
    </alternativeName>
</protein>
<name>LHA2_HALHR</name>
<proteinExistence type="evidence at protein level"/>
<feature type="chain" id="PRO_0000099782" description="Light-harvesting protein B800/830/1020 alpha-2 chain">
    <location>
        <begin position="1"/>
        <end position="65"/>
    </location>
</feature>
<feature type="topological domain" description="Cytoplasmic" evidence="1">
    <location>
        <begin position="1"/>
        <end position="13"/>
    </location>
</feature>
<feature type="transmembrane region" description="Helical" evidence="1">
    <location>
        <begin position="14"/>
        <end position="34"/>
    </location>
</feature>
<feature type="topological domain" description="Periplasmic" evidence="1">
    <location>
        <begin position="35"/>
        <end position="65"/>
    </location>
</feature>
<feature type="binding site" description="axial binding residue" evidence="1">
    <location>
        <position position="29"/>
    </location>
    <ligand>
        <name>a bacteriochlorophyll</name>
        <dbReference type="ChEBI" id="CHEBI:38201"/>
    </ligand>
    <ligandPart>
        <name>Mg</name>
        <dbReference type="ChEBI" id="CHEBI:25107"/>
    </ligandPart>
</feature>
<reference key="1">
    <citation type="journal article" date="1992" name="Eur. J. Biochem.">
        <title>The primary structure of the antenna polypeptides of Ectothiorhodospira halochloris and Ectothiorhodospira halophila. Four core-type antenna polypeptides in E. halochloris and E. halophila.</title>
        <authorList>
            <person name="Wagner-Huber R."/>
            <person name="Brunisholz R.A."/>
            <person name="Bissig I."/>
            <person name="Frank G."/>
            <person name="Suter F."/>
            <person name="Zuber H."/>
        </authorList>
    </citation>
    <scope>PROTEIN SEQUENCE</scope>
    <source>
        <strain>ATCC 35916 / DSM 1059 / BN 9850 / A</strain>
    </source>
</reference>
<comment type="function">
    <text>Antenna complexes are light-harvesting systems, which transfer the excitation energy to the reaction centers.</text>
</comment>
<comment type="subunit">
    <text>The core complex is formed by different alpha and beta chains, binding bacteriochlorophyll molecules, and arranged most probably in tetrameric structures disposed around the reaction center. The non-pigmented gamma chains may constitute additional components.</text>
</comment>
<comment type="subcellular location">
    <subcellularLocation>
        <location>Cell inner membrane</location>
        <topology>Single-pass type II membrane protein</topology>
    </subcellularLocation>
</comment>
<comment type="similarity">
    <text evidence="2">Belongs to the antenna complex alpha subunit family.</text>
</comment>
<dbReference type="PIR" id="S23164">
    <property type="entry name" value="S23164"/>
</dbReference>
<dbReference type="SMR" id="P80103"/>
<dbReference type="GO" id="GO:0019866">
    <property type="term" value="C:organelle inner membrane"/>
    <property type="evidence" value="ECO:0007669"/>
    <property type="project" value="InterPro"/>
</dbReference>
<dbReference type="GO" id="GO:0005886">
    <property type="term" value="C:plasma membrane"/>
    <property type="evidence" value="ECO:0007669"/>
    <property type="project" value="UniProtKB-SubCell"/>
</dbReference>
<dbReference type="GO" id="GO:0030077">
    <property type="term" value="C:plasma membrane light-harvesting complex"/>
    <property type="evidence" value="ECO:0007669"/>
    <property type="project" value="InterPro"/>
</dbReference>
<dbReference type="GO" id="GO:0042314">
    <property type="term" value="F:bacteriochlorophyll binding"/>
    <property type="evidence" value="ECO:0007669"/>
    <property type="project" value="UniProtKB-KW"/>
</dbReference>
<dbReference type="GO" id="GO:0045156">
    <property type="term" value="F:electron transporter, transferring electrons within the cyclic electron transport pathway of photosynthesis activity"/>
    <property type="evidence" value="ECO:0007669"/>
    <property type="project" value="InterPro"/>
</dbReference>
<dbReference type="GO" id="GO:0046872">
    <property type="term" value="F:metal ion binding"/>
    <property type="evidence" value="ECO:0007669"/>
    <property type="project" value="UniProtKB-KW"/>
</dbReference>
<dbReference type="GO" id="GO:0019684">
    <property type="term" value="P:photosynthesis, light reaction"/>
    <property type="evidence" value="ECO:0007669"/>
    <property type="project" value="InterPro"/>
</dbReference>
<dbReference type="Gene3D" id="4.10.220.20">
    <property type="entry name" value="Light-harvesting complex"/>
    <property type="match status" value="1"/>
</dbReference>
<dbReference type="InterPro" id="IPR000066">
    <property type="entry name" value="Antenna_a/b"/>
</dbReference>
<dbReference type="InterPro" id="IPR018332">
    <property type="entry name" value="Antenna_alpha"/>
</dbReference>
<dbReference type="InterPro" id="IPR002361">
    <property type="entry name" value="Antenna_alpha_CS"/>
</dbReference>
<dbReference type="InterPro" id="IPR035889">
    <property type="entry name" value="Light-harvesting_complex"/>
</dbReference>
<dbReference type="NCBIfam" id="NF040861">
    <property type="entry name" value="pufA_517_ASD"/>
    <property type="match status" value="1"/>
</dbReference>
<dbReference type="Pfam" id="PF00556">
    <property type="entry name" value="LHC"/>
    <property type="match status" value="1"/>
</dbReference>
<dbReference type="SUPFAM" id="SSF56918">
    <property type="entry name" value="Light-harvesting complex subunits"/>
    <property type="match status" value="1"/>
</dbReference>
<dbReference type="PROSITE" id="PS00968">
    <property type="entry name" value="ANTENNA_COMP_ALPHA"/>
    <property type="match status" value="1"/>
</dbReference>
<organism>
    <name type="scientific">Halorhodospira halochloris</name>
    <name type="common">Ectothiorhodospira halochloris</name>
    <dbReference type="NCBI Taxonomy" id="1052"/>
    <lineage>
        <taxon>Bacteria</taxon>
        <taxon>Pseudomonadati</taxon>
        <taxon>Pseudomonadota</taxon>
        <taxon>Gammaproteobacteria</taxon>
        <taxon>Chromatiales</taxon>
        <taxon>Ectothiorhodospiraceae</taxon>
        <taxon>Halorhodospira</taxon>
    </lineage>
</organism>
<evidence type="ECO:0000255" key="1"/>
<evidence type="ECO:0000305" key="2"/>